<comment type="function">
    <text evidence="2">Non-classical phosphatidylinositol (PtdIns) transfer protein (PITP), which exhibits PtdIns-binding/transfer activity in the absence of detectable PtdCho-binding/transfer activity. Regulates PtdIns(4,5)P2 homeostasis at the plasma membrane. Heme-binding protein that may play a role in organic oxidant-induced stress responses.</text>
</comment>
<comment type="catalytic activity">
    <reaction evidence="2">
        <text>a 1,2-diacyl-sn-glycero-3-phospho-(1D-myo-inositol)(in) = a 1,2-diacyl-sn-glycero-3-phospho-(1D-myo-inositol)(out)</text>
        <dbReference type="Rhea" id="RHEA:38691"/>
        <dbReference type="ChEBI" id="CHEBI:57880"/>
    </reaction>
    <physiologicalReaction direction="left-to-right" evidence="2">
        <dbReference type="Rhea" id="RHEA:38692"/>
    </physiologicalReaction>
</comment>
<comment type="cofactor">
    <cofactor evidence="1">
        <name>heme b</name>
        <dbReference type="ChEBI" id="CHEBI:60344"/>
    </cofactor>
</comment>
<comment type="subcellular location">
    <subcellularLocation>
        <location evidence="2">Cytoplasm</location>
    </subcellularLocation>
    <subcellularLocation>
        <location evidence="2">Endoplasmic reticulum membrane</location>
        <topology evidence="2">Peripheral membrane protein</topology>
    </subcellularLocation>
    <subcellularLocation>
        <location evidence="2">Microsome membrane</location>
        <topology evidence="2">Peripheral membrane protein</topology>
    </subcellularLocation>
</comment>
<comment type="similarity">
    <text evidence="4">Belongs to the SFH5 family.</text>
</comment>
<accession>Q5AP66</accession>
<accession>A0A1D8PEV7</accession>
<protein>
    <recommendedName>
        <fullName>Phosphatidylinositol transfer protein SFH5</fullName>
        <shortName>PITP SFH5</shortName>
    </recommendedName>
</protein>
<reference key="1">
    <citation type="journal article" date="2004" name="Proc. Natl. Acad. Sci. U.S.A.">
        <title>The diploid genome sequence of Candida albicans.</title>
        <authorList>
            <person name="Jones T."/>
            <person name="Federspiel N.A."/>
            <person name="Chibana H."/>
            <person name="Dungan J."/>
            <person name="Kalman S."/>
            <person name="Magee B.B."/>
            <person name="Newport G."/>
            <person name="Thorstenson Y.R."/>
            <person name="Agabian N."/>
            <person name="Magee P.T."/>
            <person name="Davis R.W."/>
            <person name="Scherer S."/>
        </authorList>
    </citation>
    <scope>NUCLEOTIDE SEQUENCE [LARGE SCALE GENOMIC DNA]</scope>
    <source>
        <strain>SC5314 / ATCC MYA-2876</strain>
    </source>
</reference>
<reference key="2">
    <citation type="journal article" date="2007" name="Genome Biol.">
        <title>Assembly of the Candida albicans genome into sixteen supercontigs aligned on the eight chromosomes.</title>
        <authorList>
            <person name="van het Hoog M."/>
            <person name="Rast T.J."/>
            <person name="Martchenko M."/>
            <person name="Grindle S."/>
            <person name="Dignard D."/>
            <person name="Hogues H."/>
            <person name="Cuomo C."/>
            <person name="Berriman M."/>
            <person name="Scherer S."/>
            <person name="Magee B.B."/>
            <person name="Whiteway M."/>
            <person name="Chibana H."/>
            <person name="Nantel A."/>
            <person name="Magee P.T."/>
        </authorList>
    </citation>
    <scope>GENOME REANNOTATION</scope>
    <source>
        <strain>SC5314 / ATCC MYA-2876</strain>
    </source>
</reference>
<reference key="3">
    <citation type="journal article" date="2013" name="Genome Biol.">
        <title>Assembly of a phased diploid Candida albicans genome facilitates allele-specific measurements and provides a simple model for repeat and indel structure.</title>
        <authorList>
            <person name="Muzzey D."/>
            <person name="Schwartz K."/>
            <person name="Weissman J.S."/>
            <person name="Sherlock G."/>
        </authorList>
    </citation>
    <scope>NUCLEOTIDE SEQUENCE [LARGE SCALE GENOMIC DNA]</scope>
    <scope>GENOME REANNOTATION</scope>
    <source>
        <strain>SC5314 / ATCC MYA-2876</strain>
    </source>
</reference>
<gene>
    <name type="primary">SFH5</name>
    <name type="ordered locus">CAALFM_C110270CA</name>
    <name type="ORF">CaO19.12362</name>
    <name type="ORF">CaO19.4897</name>
</gene>
<sequence>MSSSIEEVKATIKSVKLTDSQAEKLSKLIDSLPKILSGLDNPEYDEIFGYRINTKDKPYVDESIRNEILLKFLAADDYNLELSEKRLIDSLNWRNEFQPLSAAFEETFDKELNELGVITNFPNSNLKITTWNLYGNLKNPKKIFEKFGANNKVSKLPGSQFLRWRVGLMEKSLQLIDFTSTTDNRIAQVHDYNNVSMFKIDPGMKKATKEIITIFGANYPELLSTKFFINVPLIMGWVFTFFKTIRVITEATLKKFQVLNHGNLSESFNPDELPKVYGGKVEKSLFDIDVSDDIKLSEYGEVILKKVGDEEINHINDDVE</sequence>
<organism>
    <name type="scientific">Candida albicans (strain SC5314 / ATCC MYA-2876)</name>
    <name type="common">Yeast</name>
    <dbReference type="NCBI Taxonomy" id="237561"/>
    <lineage>
        <taxon>Eukaryota</taxon>
        <taxon>Fungi</taxon>
        <taxon>Dikarya</taxon>
        <taxon>Ascomycota</taxon>
        <taxon>Saccharomycotina</taxon>
        <taxon>Pichiomycetes</taxon>
        <taxon>Debaryomycetaceae</taxon>
        <taxon>Candida/Lodderomyces clade</taxon>
        <taxon>Candida</taxon>
    </lineage>
</organism>
<name>SFH5_CANAL</name>
<keyword id="KW-0963">Cytoplasm</keyword>
<keyword id="KW-0256">Endoplasmic reticulum</keyword>
<keyword id="KW-0349">Heme</keyword>
<keyword id="KW-0408">Iron</keyword>
<keyword id="KW-0445">Lipid transport</keyword>
<keyword id="KW-0472">Membrane</keyword>
<keyword id="KW-0479">Metal-binding</keyword>
<keyword id="KW-0492">Microsome</keyword>
<keyword id="KW-1185">Reference proteome</keyword>
<keyword id="KW-0813">Transport</keyword>
<evidence type="ECO:0000250" key="1">
    <source>
        <dbReference type="UniProtKB" id="A6ZQI5"/>
    </source>
</evidence>
<evidence type="ECO:0000250" key="2">
    <source>
        <dbReference type="UniProtKB" id="P47008"/>
    </source>
</evidence>
<evidence type="ECO:0000255" key="3">
    <source>
        <dbReference type="PROSITE-ProRule" id="PRU00056"/>
    </source>
</evidence>
<evidence type="ECO:0000305" key="4"/>
<dbReference type="EMBL" id="CP017623">
    <property type="protein sequence ID" value="AOW26657.1"/>
    <property type="molecule type" value="Genomic_DNA"/>
</dbReference>
<dbReference type="RefSeq" id="XP_723579.1">
    <property type="nucleotide sequence ID" value="XM_718486.2"/>
</dbReference>
<dbReference type="SMR" id="Q5AP66"/>
<dbReference type="FunCoup" id="Q5AP66">
    <property type="interactions" value="47"/>
</dbReference>
<dbReference type="STRING" id="237561.Q5AP66"/>
<dbReference type="EnsemblFungi" id="C1_10270C_A-T">
    <property type="protein sequence ID" value="C1_10270C_A-T-p1"/>
    <property type="gene ID" value="C1_10270C_A"/>
</dbReference>
<dbReference type="GeneID" id="3634884"/>
<dbReference type="KEGG" id="cal:CAALFM_C110270CA"/>
<dbReference type="CGD" id="CAL0000192835">
    <property type="gene designation" value="SFH5"/>
</dbReference>
<dbReference type="VEuPathDB" id="FungiDB:C1_10270C_A"/>
<dbReference type="eggNOG" id="KOG1471">
    <property type="taxonomic scope" value="Eukaryota"/>
</dbReference>
<dbReference type="HOGENOM" id="CLU_045138_0_1_1"/>
<dbReference type="InParanoid" id="Q5AP66"/>
<dbReference type="OMA" id="KRVVTWN"/>
<dbReference type="OrthoDB" id="75724at2759"/>
<dbReference type="PRO" id="PR:Q5AP66"/>
<dbReference type="Proteomes" id="UP000000559">
    <property type="component" value="Chromosome 1"/>
</dbReference>
<dbReference type="GO" id="GO:0032541">
    <property type="term" value="C:cortical endoplasmic reticulum"/>
    <property type="evidence" value="ECO:0000318"/>
    <property type="project" value="GO_Central"/>
</dbReference>
<dbReference type="GO" id="GO:0005829">
    <property type="term" value="C:cytosol"/>
    <property type="evidence" value="ECO:0000318"/>
    <property type="project" value="GO_Central"/>
</dbReference>
<dbReference type="GO" id="GO:0005789">
    <property type="term" value="C:endoplasmic reticulum membrane"/>
    <property type="evidence" value="ECO:0007669"/>
    <property type="project" value="UniProtKB-SubCell"/>
</dbReference>
<dbReference type="GO" id="GO:0005886">
    <property type="term" value="C:plasma membrane"/>
    <property type="evidence" value="ECO:0000318"/>
    <property type="project" value="GO_Central"/>
</dbReference>
<dbReference type="GO" id="GO:0020037">
    <property type="term" value="F:heme binding"/>
    <property type="evidence" value="ECO:0007669"/>
    <property type="project" value="EnsemblFungi"/>
</dbReference>
<dbReference type="GO" id="GO:0046872">
    <property type="term" value="F:metal ion binding"/>
    <property type="evidence" value="ECO:0007669"/>
    <property type="project" value="UniProtKB-KW"/>
</dbReference>
<dbReference type="GO" id="GO:0008526">
    <property type="term" value="F:phosphatidylinositol transfer activity"/>
    <property type="evidence" value="ECO:0000318"/>
    <property type="project" value="GO_Central"/>
</dbReference>
<dbReference type="GO" id="GO:0043001">
    <property type="term" value="P:Golgi to plasma membrane protein transport"/>
    <property type="evidence" value="ECO:0000318"/>
    <property type="project" value="GO_Central"/>
</dbReference>
<dbReference type="GO" id="GO:0046488">
    <property type="term" value="P:phosphatidylinositol metabolic process"/>
    <property type="evidence" value="ECO:0007669"/>
    <property type="project" value="EnsemblFungi"/>
</dbReference>
<dbReference type="GO" id="GO:2000114">
    <property type="term" value="P:regulation of establishment of cell polarity"/>
    <property type="evidence" value="ECO:0007669"/>
    <property type="project" value="EnsemblFungi"/>
</dbReference>
<dbReference type="GO" id="GO:0017157">
    <property type="term" value="P:regulation of exocytosis"/>
    <property type="evidence" value="ECO:0000318"/>
    <property type="project" value="GO_Central"/>
</dbReference>
<dbReference type="CDD" id="cd00170">
    <property type="entry name" value="SEC14"/>
    <property type="match status" value="1"/>
</dbReference>
<dbReference type="FunFam" id="3.40.525.10:FF:000038">
    <property type="entry name" value="Phosphatidylinositol transfer protein SFH5"/>
    <property type="match status" value="1"/>
</dbReference>
<dbReference type="Gene3D" id="3.40.525.10">
    <property type="entry name" value="CRAL-TRIO lipid binding domain"/>
    <property type="match status" value="1"/>
</dbReference>
<dbReference type="InterPro" id="IPR001251">
    <property type="entry name" value="CRAL-TRIO_dom"/>
</dbReference>
<dbReference type="InterPro" id="IPR036865">
    <property type="entry name" value="CRAL-TRIO_dom_sf"/>
</dbReference>
<dbReference type="InterPro" id="IPR036273">
    <property type="entry name" value="CRAL/TRIO_N_dom_sf"/>
</dbReference>
<dbReference type="InterPro" id="IPR042938">
    <property type="entry name" value="Sfh5"/>
</dbReference>
<dbReference type="PANTHER" id="PTHR47669">
    <property type="entry name" value="PHOSPHATIDYLINOSITOL TRANSFER PROTEIN SFH5"/>
    <property type="match status" value="1"/>
</dbReference>
<dbReference type="PANTHER" id="PTHR47669:SF1">
    <property type="entry name" value="PHOSPHATIDYLINOSITOL TRANSFER PROTEIN SFH5"/>
    <property type="match status" value="1"/>
</dbReference>
<dbReference type="Pfam" id="PF00650">
    <property type="entry name" value="CRAL_TRIO"/>
    <property type="match status" value="1"/>
</dbReference>
<dbReference type="SMART" id="SM00516">
    <property type="entry name" value="SEC14"/>
    <property type="match status" value="1"/>
</dbReference>
<dbReference type="SUPFAM" id="SSF52087">
    <property type="entry name" value="CRAL/TRIO domain"/>
    <property type="match status" value="1"/>
</dbReference>
<dbReference type="SUPFAM" id="SSF46938">
    <property type="entry name" value="CRAL/TRIO N-terminal domain"/>
    <property type="match status" value="1"/>
</dbReference>
<dbReference type="PROSITE" id="PS50191">
    <property type="entry name" value="CRAL_TRIO"/>
    <property type="match status" value="1"/>
</dbReference>
<proteinExistence type="inferred from homology"/>
<feature type="chain" id="PRO_0000324973" description="Phosphatidylinositol transfer protein SFH5">
    <location>
        <begin position="1"/>
        <end position="320"/>
    </location>
</feature>
<feature type="domain" description="CRAL-TRIO" evidence="3">
    <location>
        <begin position="120"/>
        <end position="285"/>
    </location>
</feature>
<feature type="binding site" evidence="1">
    <location>
        <position position="134"/>
    </location>
    <ligand>
        <name>heme</name>
        <dbReference type="ChEBI" id="CHEBI:30413"/>
    </ligand>
</feature>
<feature type="binding site" evidence="1">
    <location>
        <position position="165"/>
    </location>
    <ligand>
        <name>heme</name>
        <dbReference type="ChEBI" id="CHEBI:30413"/>
    </ligand>
</feature>
<feature type="binding site" evidence="1">
    <location>
        <position position="190"/>
    </location>
    <ligand>
        <name>heme</name>
        <dbReference type="ChEBI" id="CHEBI:30413"/>
    </ligand>
</feature>
<feature type="binding site" description="proximal binding residue" evidence="1">
    <location>
        <position position="192"/>
    </location>
    <ligand>
        <name>heme</name>
        <dbReference type="ChEBI" id="CHEBI:30413"/>
    </ligand>
    <ligandPart>
        <name>Fe</name>
        <dbReference type="ChEBI" id="CHEBI:18248"/>
    </ligandPart>
</feature>
<feature type="binding site" evidence="1">
    <location>
        <position position="226"/>
    </location>
    <ligand>
        <name>heme</name>
        <dbReference type="ChEBI" id="CHEBI:30413"/>
    </ligand>
</feature>